<organism>
    <name type="scientific">Rhizobium meliloti (strain 1021)</name>
    <name type="common">Ensifer meliloti</name>
    <name type="synonym">Sinorhizobium meliloti</name>
    <dbReference type="NCBI Taxonomy" id="266834"/>
    <lineage>
        <taxon>Bacteria</taxon>
        <taxon>Pseudomonadati</taxon>
        <taxon>Pseudomonadota</taxon>
        <taxon>Alphaproteobacteria</taxon>
        <taxon>Hyphomicrobiales</taxon>
        <taxon>Rhizobiaceae</taxon>
        <taxon>Sinorhizobium/Ensifer group</taxon>
        <taxon>Sinorhizobium</taxon>
    </lineage>
</organism>
<evidence type="ECO:0000250" key="1"/>
<evidence type="ECO:0000305" key="2"/>
<reference key="1">
    <citation type="journal article" date="2001" name="Proc. Natl. Acad. Sci. U.S.A.">
        <title>Analysis of the chromosome sequence of the legume symbiont Sinorhizobium meliloti strain 1021.</title>
        <authorList>
            <person name="Capela D."/>
            <person name="Barloy-Hubler F."/>
            <person name="Gouzy J."/>
            <person name="Bothe G."/>
            <person name="Ampe F."/>
            <person name="Batut J."/>
            <person name="Boistard P."/>
            <person name="Becker A."/>
            <person name="Boutry M."/>
            <person name="Cadieu E."/>
            <person name="Dreano S."/>
            <person name="Gloux S."/>
            <person name="Godrie T."/>
            <person name="Goffeau A."/>
            <person name="Kahn D."/>
            <person name="Kiss E."/>
            <person name="Lelaure V."/>
            <person name="Masuy D."/>
            <person name="Pohl T."/>
            <person name="Portetelle D."/>
            <person name="Puehler A."/>
            <person name="Purnelle B."/>
            <person name="Ramsperger U."/>
            <person name="Renard C."/>
            <person name="Thebault P."/>
            <person name="Vandenbol M."/>
            <person name="Weidner S."/>
            <person name="Galibert F."/>
        </authorList>
    </citation>
    <scope>NUCLEOTIDE SEQUENCE [LARGE SCALE GENOMIC DNA]</scope>
    <source>
        <strain>1021</strain>
    </source>
</reference>
<reference key="2">
    <citation type="journal article" date="2001" name="Science">
        <title>The composite genome of the legume symbiont Sinorhizobium meliloti.</title>
        <authorList>
            <person name="Galibert F."/>
            <person name="Finan T.M."/>
            <person name="Long S.R."/>
            <person name="Puehler A."/>
            <person name="Abola P."/>
            <person name="Ampe F."/>
            <person name="Barloy-Hubler F."/>
            <person name="Barnett M.J."/>
            <person name="Becker A."/>
            <person name="Boistard P."/>
            <person name="Bothe G."/>
            <person name="Boutry M."/>
            <person name="Bowser L."/>
            <person name="Buhrmester J."/>
            <person name="Cadieu E."/>
            <person name="Capela D."/>
            <person name="Chain P."/>
            <person name="Cowie A."/>
            <person name="Davis R.W."/>
            <person name="Dreano S."/>
            <person name="Federspiel N.A."/>
            <person name="Fisher R.F."/>
            <person name="Gloux S."/>
            <person name="Godrie T."/>
            <person name="Goffeau A."/>
            <person name="Golding B."/>
            <person name="Gouzy J."/>
            <person name="Gurjal M."/>
            <person name="Hernandez-Lucas I."/>
            <person name="Hong A."/>
            <person name="Huizar L."/>
            <person name="Hyman R.W."/>
            <person name="Jones T."/>
            <person name="Kahn D."/>
            <person name="Kahn M.L."/>
            <person name="Kalman S."/>
            <person name="Keating D.H."/>
            <person name="Kiss E."/>
            <person name="Komp C."/>
            <person name="Lelaure V."/>
            <person name="Masuy D."/>
            <person name="Palm C."/>
            <person name="Peck M.C."/>
            <person name="Pohl T.M."/>
            <person name="Portetelle D."/>
            <person name="Purnelle B."/>
            <person name="Ramsperger U."/>
            <person name="Surzycki R."/>
            <person name="Thebault P."/>
            <person name="Vandenbol M."/>
            <person name="Vorhoelter F.J."/>
            <person name="Weidner S."/>
            <person name="Wells D.H."/>
            <person name="Wong K."/>
            <person name="Yeh K.-C."/>
            <person name="Batut J."/>
        </authorList>
    </citation>
    <scope>NUCLEOTIDE SEQUENCE [LARGE SCALE GENOMIC DNA]</scope>
    <source>
        <strain>1021</strain>
    </source>
</reference>
<feature type="chain" id="PRO_0000163093" description="Molybdopterin synthase catalytic subunit">
    <location>
        <begin position="1"/>
        <end position="155"/>
    </location>
</feature>
<feature type="binding site" evidence="1">
    <location>
        <begin position="39"/>
        <end position="41"/>
    </location>
    <ligand>
        <name>substrate</name>
    </ligand>
</feature>
<feature type="binding site" evidence="1">
    <location>
        <begin position="103"/>
        <end position="104"/>
    </location>
    <ligand>
        <name>substrate</name>
    </ligand>
</feature>
<feature type="binding site" evidence="1">
    <location>
        <position position="119"/>
    </location>
    <ligand>
        <name>substrate</name>
    </ligand>
</feature>
<feature type="binding site" evidence="1">
    <location>
        <begin position="126"/>
        <end position="128"/>
    </location>
    <ligand>
        <name>substrate</name>
    </ligand>
</feature>
<name>MOAE_RHIME</name>
<dbReference type="EC" id="2.8.1.12"/>
<dbReference type="EMBL" id="AL591688">
    <property type="protein sequence ID" value="CAC45747.1"/>
    <property type="molecule type" value="Genomic_DNA"/>
</dbReference>
<dbReference type="RefSeq" id="NP_385274.1">
    <property type="nucleotide sequence ID" value="NC_003047.1"/>
</dbReference>
<dbReference type="RefSeq" id="WP_010969085.1">
    <property type="nucleotide sequence ID" value="NC_003047.1"/>
</dbReference>
<dbReference type="SMR" id="Q92QX5"/>
<dbReference type="EnsemblBacteria" id="CAC45747">
    <property type="protein sequence ID" value="CAC45747"/>
    <property type="gene ID" value="SMc00599"/>
</dbReference>
<dbReference type="KEGG" id="sme:SMc00599"/>
<dbReference type="PATRIC" id="fig|266834.11.peg.2578"/>
<dbReference type="eggNOG" id="COG0314">
    <property type="taxonomic scope" value="Bacteria"/>
</dbReference>
<dbReference type="HOGENOM" id="CLU_089568_2_1_5"/>
<dbReference type="OrthoDB" id="9803224at2"/>
<dbReference type="UniPathway" id="UPA00344"/>
<dbReference type="Proteomes" id="UP000001976">
    <property type="component" value="Chromosome"/>
</dbReference>
<dbReference type="GO" id="GO:0030366">
    <property type="term" value="F:molybdopterin synthase activity"/>
    <property type="evidence" value="ECO:0007669"/>
    <property type="project" value="UniProtKB-EC"/>
</dbReference>
<dbReference type="GO" id="GO:0006777">
    <property type="term" value="P:Mo-molybdopterin cofactor biosynthetic process"/>
    <property type="evidence" value="ECO:0007669"/>
    <property type="project" value="UniProtKB-KW"/>
</dbReference>
<dbReference type="CDD" id="cd00756">
    <property type="entry name" value="MoaE"/>
    <property type="match status" value="1"/>
</dbReference>
<dbReference type="Gene3D" id="3.90.1170.40">
    <property type="entry name" value="Molybdopterin biosynthesis MoaE subunit"/>
    <property type="match status" value="1"/>
</dbReference>
<dbReference type="InterPro" id="IPR036563">
    <property type="entry name" value="MoaE_sf"/>
</dbReference>
<dbReference type="InterPro" id="IPR003448">
    <property type="entry name" value="Mopterin_biosynth_MoaE"/>
</dbReference>
<dbReference type="PANTHER" id="PTHR23404">
    <property type="entry name" value="MOLYBDOPTERIN SYNTHASE RELATED"/>
    <property type="match status" value="1"/>
</dbReference>
<dbReference type="Pfam" id="PF02391">
    <property type="entry name" value="MoaE"/>
    <property type="match status" value="1"/>
</dbReference>
<dbReference type="SUPFAM" id="SSF54690">
    <property type="entry name" value="Molybdopterin synthase subunit MoaE"/>
    <property type="match status" value="1"/>
</dbReference>
<protein>
    <recommendedName>
        <fullName>Molybdopterin synthase catalytic subunit</fullName>
        <ecNumber>2.8.1.12</ecNumber>
    </recommendedName>
    <alternativeName>
        <fullName>MPT synthase subunit 2</fullName>
    </alternativeName>
    <alternativeName>
        <fullName>Molybdenum cofactor biosynthesis protein E</fullName>
    </alternativeName>
    <alternativeName>
        <fullName>Molybdopterin-converting factor large subunit</fullName>
    </alternativeName>
    <alternativeName>
        <fullName>Molybdopterin-converting factor subunit 2</fullName>
    </alternativeName>
</protein>
<sequence>MAAPVTVRVQRDDFDIAAEVSALCRARTDIGAVVTFSGLCRDEAGALSALELEHYPGMAEAEIERICHEAVERFGLQAATAIHRFGRMEPGANIVLVATASPHRQAAFDGANFIMDFLKTSAPFWKKEHHADGSAGDWVSAKDADDAARDRWTRR</sequence>
<proteinExistence type="inferred from homology"/>
<keyword id="KW-0501">Molybdenum cofactor biosynthesis</keyword>
<keyword id="KW-1185">Reference proteome</keyword>
<keyword id="KW-0808">Transferase</keyword>
<gene>
    <name type="primary">moaE</name>
    <name type="ordered locus">R01168</name>
    <name type="ORF">SMc00599</name>
</gene>
<accession>Q92QX5</accession>
<comment type="function">
    <text evidence="1">Converts molybdopterin precursor Z into molybdopterin. This requires the incorporation of two sulfur atoms into precursor Z to generate a dithiolene group. The sulfur is provided by MoaD (By similarity).</text>
</comment>
<comment type="catalytic activity">
    <reaction>
        <text>2 [molybdopterin-synthase sulfur-carrier protein]-C-terminal-Gly-aminoethanethioate + cyclic pyranopterin phosphate + H2O = molybdopterin + 2 [molybdopterin-synthase sulfur-carrier protein]-C-terminal Gly-Gly + 2 H(+)</text>
        <dbReference type="Rhea" id="RHEA:26333"/>
        <dbReference type="Rhea" id="RHEA-COMP:12202"/>
        <dbReference type="Rhea" id="RHEA-COMP:19907"/>
        <dbReference type="ChEBI" id="CHEBI:15377"/>
        <dbReference type="ChEBI" id="CHEBI:15378"/>
        <dbReference type="ChEBI" id="CHEBI:58698"/>
        <dbReference type="ChEBI" id="CHEBI:59648"/>
        <dbReference type="ChEBI" id="CHEBI:90778"/>
        <dbReference type="ChEBI" id="CHEBI:232372"/>
        <dbReference type="EC" id="2.8.1.12"/>
    </reaction>
</comment>
<comment type="pathway">
    <text>Cofactor biosynthesis; molybdopterin biosynthesis.</text>
</comment>
<comment type="subunit">
    <text evidence="1">Heterotetramer of 2 MoaD subunits and 2 MoaE subunits. Also stable as homodimer. The enzyme changes between these two forms during catalysis (By similarity).</text>
</comment>
<comment type="similarity">
    <text evidence="2">Belongs to the MoaE family.</text>
</comment>